<dbReference type="EC" id="2.7.11.22"/>
<dbReference type="EMBL" id="X89477">
    <property type="protein sequence ID" value="CAA61666.1"/>
    <property type="molecule type" value="mRNA"/>
</dbReference>
<dbReference type="PIR" id="S57926">
    <property type="entry name" value="S57926"/>
</dbReference>
<dbReference type="RefSeq" id="NP_001079719.1">
    <property type="nucleotide sequence ID" value="NM_001086250.1"/>
</dbReference>
<dbReference type="SMR" id="Q91727"/>
<dbReference type="BioGRID" id="97649">
    <property type="interactions" value="1"/>
</dbReference>
<dbReference type="IntAct" id="Q91727">
    <property type="interactions" value="2"/>
</dbReference>
<dbReference type="MINT" id="Q91727"/>
<dbReference type="DNASU" id="379406"/>
<dbReference type="GeneID" id="379406"/>
<dbReference type="KEGG" id="xla:379406"/>
<dbReference type="AGR" id="Xenbase:XB-GENE-5900736"/>
<dbReference type="CTD" id="379406"/>
<dbReference type="Xenbase" id="XB-GENE-5900736">
    <property type="gene designation" value="cdk4.S"/>
</dbReference>
<dbReference type="OrthoDB" id="1732493at2759"/>
<dbReference type="Proteomes" id="UP000186698">
    <property type="component" value="Chromosome 2S"/>
</dbReference>
<dbReference type="Bgee" id="379406">
    <property type="expression patterns" value="Expressed in blastula and 19 other cell types or tissues"/>
</dbReference>
<dbReference type="GO" id="GO:0000307">
    <property type="term" value="C:cyclin-dependent protein kinase holoenzyme complex"/>
    <property type="evidence" value="ECO:0000318"/>
    <property type="project" value="GO_Central"/>
</dbReference>
<dbReference type="GO" id="GO:0005737">
    <property type="term" value="C:cytoplasm"/>
    <property type="evidence" value="ECO:0000318"/>
    <property type="project" value="GO_Central"/>
</dbReference>
<dbReference type="GO" id="GO:0005634">
    <property type="term" value="C:nucleus"/>
    <property type="evidence" value="ECO:0000250"/>
    <property type="project" value="UniProtKB"/>
</dbReference>
<dbReference type="GO" id="GO:0005524">
    <property type="term" value="F:ATP binding"/>
    <property type="evidence" value="ECO:0007669"/>
    <property type="project" value="UniProtKB-KW"/>
</dbReference>
<dbReference type="GO" id="GO:0030332">
    <property type="term" value="F:cyclin binding"/>
    <property type="evidence" value="ECO:0000318"/>
    <property type="project" value="GO_Central"/>
</dbReference>
<dbReference type="GO" id="GO:0004693">
    <property type="term" value="F:cyclin-dependent protein serine/threonine kinase activity"/>
    <property type="evidence" value="ECO:0000318"/>
    <property type="project" value="GO_Central"/>
</dbReference>
<dbReference type="GO" id="GO:0106310">
    <property type="term" value="F:protein serine kinase activity"/>
    <property type="evidence" value="ECO:0007669"/>
    <property type="project" value="RHEA"/>
</dbReference>
<dbReference type="GO" id="GO:0051301">
    <property type="term" value="P:cell division"/>
    <property type="evidence" value="ECO:0007669"/>
    <property type="project" value="UniProtKB-KW"/>
</dbReference>
<dbReference type="GO" id="GO:0000082">
    <property type="term" value="P:G1/S transition of mitotic cell cycle"/>
    <property type="evidence" value="ECO:0000318"/>
    <property type="project" value="GO_Central"/>
</dbReference>
<dbReference type="GO" id="GO:0010389">
    <property type="term" value="P:regulation of G2/M transition of mitotic cell cycle"/>
    <property type="evidence" value="ECO:0000318"/>
    <property type="project" value="GO_Central"/>
</dbReference>
<dbReference type="GO" id="GO:0010468">
    <property type="term" value="P:regulation of gene expression"/>
    <property type="evidence" value="ECO:0000318"/>
    <property type="project" value="GO_Central"/>
</dbReference>
<dbReference type="GO" id="GO:0007165">
    <property type="term" value="P:signal transduction"/>
    <property type="evidence" value="ECO:0000318"/>
    <property type="project" value="GO_Central"/>
</dbReference>
<dbReference type="CDD" id="cd07863">
    <property type="entry name" value="STKc_CDK4"/>
    <property type="match status" value="1"/>
</dbReference>
<dbReference type="FunFam" id="3.30.200.20:FF:000124">
    <property type="entry name" value="Cyclin-dependent kinase 4"/>
    <property type="match status" value="1"/>
</dbReference>
<dbReference type="FunFam" id="1.10.510.10:FF:000205">
    <property type="entry name" value="Cyclin-dependent kinase 6"/>
    <property type="match status" value="1"/>
</dbReference>
<dbReference type="Gene3D" id="3.30.200.20">
    <property type="entry name" value="Phosphorylase Kinase, domain 1"/>
    <property type="match status" value="1"/>
</dbReference>
<dbReference type="Gene3D" id="1.10.510.10">
    <property type="entry name" value="Transferase(Phosphotransferase) domain 1"/>
    <property type="match status" value="1"/>
</dbReference>
<dbReference type="InterPro" id="IPR050108">
    <property type="entry name" value="CDK"/>
</dbReference>
<dbReference type="InterPro" id="IPR011009">
    <property type="entry name" value="Kinase-like_dom_sf"/>
</dbReference>
<dbReference type="InterPro" id="IPR000719">
    <property type="entry name" value="Prot_kinase_dom"/>
</dbReference>
<dbReference type="InterPro" id="IPR017441">
    <property type="entry name" value="Protein_kinase_ATP_BS"/>
</dbReference>
<dbReference type="InterPro" id="IPR008271">
    <property type="entry name" value="Ser/Thr_kinase_AS"/>
</dbReference>
<dbReference type="PANTHER" id="PTHR24056">
    <property type="entry name" value="CELL DIVISION PROTEIN KINASE"/>
    <property type="match status" value="1"/>
</dbReference>
<dbReference type="PANTHER" id="PTHR24056:SF129">
    <property type="entry name" value="CYCLIN-DEPENDENT KINASE 4"/>
    <property type="match status" value="1"/>
</dbReference>
<dbReference type="Pfam" id="PF00069">
    <property type="entry name" value="Pkinase"/>
    <property type="match status" value="1"/>
</dbReference>
<dbReference type="SMART" id="SM00220">
    <property type="entry name" value="S_TKc"/>
    <property type="match status" value="1"/>
</dbReference>
<dbReference type="SUPFAM" id="SSF56112">
    <property type="entry name" value="Protein kinase-like (PK-like)"/>
    <property type="match status" value="1"/>
</dbReference>
<dbReference type="PROSITE" id="PS00107">
    <property type="entry name" value="PROTEIN_KINASE_ATP"/>
    <property type="match status" value="1"/>
</dbReference>
<dbReference type="PROSITE" id="PS50011">
    <property type="entry name" value="PROTEIN_KINASE_DOM"/>
    <property type="match status" value="1"/>
</dbReference>
<dbReference type="PROSITE" id="PS00108">
    <property type="entry name" value="PROTEIN_KINASE_ST"/>
    <property type="match status" value="1"/>
</dbReference>
<accession>Q91727</accession>
<keyword id="KW-0067">ATP-binding</keyword>
<keyword id="KW-0131">Cell cycle</keyword>
<keyword id="KW-0132">Cell division</keyword>
<keyword id="KW-0963">Cytoplasm</keyword>
<keyword id="KW-0418">Kinase</keyword>
<keyword id="KW-0547">Nucleotide-binding</keyword>
<keyword id="KW-0597">Phosphoprotein</keyword>
<keyword id="KW-1185">Reference proteome</keyword>
<keyword id="KW-0723">Serine/threonine-protein kinase</keyword>
<keyword id="KW-0808">Transferase</keyword>
<proteinExistence type="evidence at protein level"/>
<comment type="function">
    <text>Probably involved in the control of the cell cycle.</text>
</comment>
<comment type="catalytic activity">
    <reaction>
        <text>L-seryl-[protein] + ATP = O-phospho-L-seryl-[protein] + ADP + H(+)</text>
        <dbReference type="Rhea" id="RHEA:17989"/>
        <dbReference type="Rhea" id="RHEA-COMP:9863"/>
        <dbReference type="Rhea" id="RHEA-COMP:11604"/>
        <dbReference type="ChEBI" id="CHEBI:15378"/>
        <dbReference type="ChEBI" id="CHEBI:29999"/>
        <dbReference type="ChEBI" id="CHEBI:30616"/>
        <dbReference type="ChEBI" id="CHEBI:83421"/>
        <dbReference type="ChEBI" id="CHEBI:456216"/>
        <dbReference type="EC" id="2.7.11.22"/>
    </reaction>
</comment>
<comment type="catalytic activity">
    <reaction>
        <text>L-threonyl-[protein] + ATP = O-phospho-L-threonyl-[protein] + ADP + H(+)</text>
        <dbReference type="Rhea" id="RHEA:46608"/>
        <dbReference type="Rhea" id="RHEA-COMP:11060"/>
        <dbReference type="Rhea" id="RHEA-COMP:11605"/>
        <dbReference type="ChEBI" id="CHEBI:15378"/>
        <dbReference type="ChEBI" id="CHEBI:30013"/>
        <dbReference type="ChEBI" id="CHEBI:30616"/>
        <dbReference type="ChEBI" id="CHEBI:61977"/>
        <dbReference type="ChEBI" id="CHEBI:456216"/>
        <dbReference type="EC" id="2.7.11.22"/>
    </reaction>
</comment>
<comment type="activity regulation">
    <text evidence="1">Phosphorylation at Thr-172 is necessary for enzymatic activity.</text>
</comment>
<comment type="subunit">
    <text evidence="2">Forms a stable complex with D-type G1 cyclins.</text>
</comment>
<comment type="interaction">
    <interactant intactId="EBI-7270544">
        <id>Q91727</id>
    </interactant>
    <interactant intactId="EBI-7270567">
        <id>P50755</id>
        <label>ccnd1</label>
    </interactant>
    <organismsDiffer>false</organismsDiffer>
    <experiments>2</experiments>
</comment>
<comment type="interaction">
    <interactant intactId="EBI-7270544">
        <id>Q91727</id>
    </interactant>
    <interactant intactId="EBI-7270670">
        <id>Q6GLD3</id>
        <label>ccnd1</label>
    </interactant>
    <organismsDiffer>true</organismsDiffer>
    <experiments>2</experiments>
</comment>
<comment type="subcellular location">
    <subcellularLocation>
        <location evidence="2">Cytoplasm</location>
    </subcellularLocation>
</comment>
<comment type="similarity">
    <text evidence="5">Belongs to the protein kinase superfamily. CMGC Ser/Thr protein kinase family. CDC2/CDKX subfamily.</text>
</comment>
<sequence>MSKEMKGQYEPVAEIGVGAYGTVYKARDLQSGKFVALKNVRVQTNENGLPLSTVREVTLLKRLEHFDHPNIVKLMDVCASARTDRETKVTLVFEHVDQDLKTYLSKVPPPGLPLETIKDLMKQFLSGLEFLHLNCIVHRDLKPENILVTSGGQVKLADFGLARIYSCQMALTPVVVTLWYRAPEVLLQSTYATPVDVWSAGCIFAEMFKRKPLFCGNSEADQLCKIFDIIGLPSEEEWPVDVTLPRSAFSPRTQQPVDKFVPEIDAMGADLLLAMLTFSPQKRISASDALLHPFFADDPQACSKQEHFTHICTATDEVK</sequence>
<gene>
    <name type="primary">cdk4</name>
</gene>
<reference key="1">
    <citation type="submission" date="1995-07" db="EMBL/GenBank/DDBJ databases">
        <title>D-type cyclins in Xenopus laevis.</title>
        <authorList>
            <person name="Cockerill M.J."/>
            <person name="Hunt T."/>
        </authorList>
    </citation>
    <scope>NUCLEOTIDE SEQUENCE [MRNA]</scope>
</reference>
<organism>
    <name type="scientific">Xenopus laevis</name>
    <name type="common">African clawed frog</name>
    <dbReference type="NCBI Taxonomy" id="8355"/>
    <lineage>
        <taxon>Eukaryota</taxon>
        <taxon>Metazoa</taxon>
        <taxon>Chordata</taxon>
        <taxon>Craniata</taxon>
        <taxon>Vertebrata</taxon>
        <taxon>Euteleostomi</taxon>
        <taxon>Amphibia</taxon>
        <taxon>Batrachia</taxon>
        <taxon>Anura</taxon>
        <taxon>Pipoidea</taxon>
        <taxon>Pipidae</taxon>
        <taxon>Xenopodinae</taxon>
        <taxon>Xenopus</taxon>
        <taxon>Xenopus</taxon>
    </lineage>
</organism>
<protein>
    <recommendedName>
        <fullName>Cyclin-dependent kinase 4</fullName>
        <ecNumber>2.7.11.22</ecNumber>
    </recommendedName>
    <alternativeName>
        <fullName>Cell division protein kinase 4</fullName>
    </alternativeName>
</protein>
<feature type="chain" id="PRO_0000085782" description="Cyclin-dependent kinase 4">
    <location>
        <begin position="1"/>
        <end position="319"/>
    </location>
</feature>
<feature type="domain" description="Protein kinase" evidence="3">
    <location>
        <begin position="9"/>
        <end position="295"/>
    </location>
</feature>
<feature type="active site" description="Proton acceptor" evidence="3 4">
    <location>
        <position position="140"/>
    </location>
</feature>
<feature type="binding site" evidence="3">
    <location>
        <begin position="15"/>
        <end position="23"/>
    </location>
    <ligand>
        <name>ATP</name>
        <dbReference type="ChEBI" id="CHEBI:30616"/>
    </ligand>
</feature>
<feature type="binding site" evidence="3">
    <location>
        <position position="38"/>
    </location>
    <ligand>
        <name>ATP</name>
        <dbReference type="ChEBI" id="CHEBI:30616"/>
    </ligand>
</feature>
<feature type="modified residue" description="Phosphothreonine; by CAK" evidence="1">
    <location>
        <position position="172"/>
    </location>
</feature>
<evidence type="ECO:0000250" key="1"/>
<evidence type="ECO:0000250" key="2">
    <source>
        <dbReference type="UniProtKB" id="P11802"/>
    </source>
</evidence>
<evidence type="ECO:0000255" key="3">
    <source>
        <dbReference type="PROSITE-ProRule" id="PRU00159"/>
    </source>
</evidence>
<evidence type="ECO:0000255" key="4">
    <source>
        <dbReference type="PROSITE-ProRule" id="PRU10027"/>
    </source>
</evidence>
<evidence type="ECO:0000305" key="5"/>
<name>CDK4_XENLA</name>